<feature type="chain" id="PRO_0000133086" description="Protein NS0">
    <location>
        <begin position="1"/>
        <end position="23"/>
    </location>
</feature>
<accession>Q8BB12</accession>
<gene>
    <name type="primary">NS0</name>
    <name type="ORF">ORF1</name>
</gene>
<name>NS0_PCV2</name>
<keyword id="KW-0877">Alternative promoter usage</keyword>
<keyword id="KW-0025">Alternative splicing</keyword>
<keyword id="KW-1185">Reference proteome</keyword>
<organism>
    <name type="scientific">Porcine circovirus 2</name>
    <name type="common">PCV2</name>
    <dbReference type="NCBI Taxonomy" id="85708"/>
    <lineage>
        <taxon>Viruses</taxon>
        <taxon>Monodnaviria</taxon>
        <taxon>Shotokuvirae</taxon>
        <taxon>Cressdnaviricota</taxon>
        <taxon>Arfiviricetes</taxon>
        <taxon>Cirlivirales</taxon>
        <taxon>Circoviridae</taxon>
        <taxon>Circovirus</taxon>
        <taxon>Circovirus porcine2</taxon>
    </lineage>
</organism>
<sequence>MVTMVKKWLLLMTFMAGCRGMIY</sequence>
<proteinExistence type="predicted"/>
<evidence type="ECO:0000269" key="1">
    <source>
    </source>
</evidence>
<evidence type="ECO:0000305" key="2">
    <source>
    </source>
</evidence>
<comment type="function">
    <text evidence="1">May play a role inhost modulation. Is not involved in viral protein synthesis or DNA replication.</text>
</comment>
<comment type="alternative products">
    <event type="alternative promoter"/>
    <event type="alternative splicing"/>
    <isoform>
        <id>Q8BB12-1</id>
        <name>NS0</name>
        <sequence type="displayed"/>
    </isoform>
    <isoform>
        <id>Q8BB16-2</id>
        <name>Rep'</name>
        <sequence type="external"/>
    </isoform>
    <isoform>
        <id>Q8BB16-6</id>
        <name>NS515</name>
        <sequence type="external"/>
    </isoform>
    <isoform>
        <id>Q8BB16-7</id>
        <name>NS672</name>
        <sequence type="external"/>
    </isoform>
    <isoform>
        <id>Q8BB16-3</id>
        <name>Rep3a</name>
        <sequence type="external"/>
    </isoform>
    <isoform>
        <id>Q8BB16-4</id>
        <name>Rep3b</name>
        <sequence type="external"/>
    </isoform>
    <isoform>
        <id>Q8BB16-5</id>
        <name>Rep3c</name>
        <sequence type="external"/>
    </isoform>
    <isoform>
        <id>Q8BB16-1</id>
        <name>Rep</name>
        <sequence type="external"/>
    </isoform>
    <isoform>
        <id>Q8BB12-2</id>
        <name>NS462</name>
        <sequence type="not described"/>
    </isoform>
    <isoform>
        <id>Q8BB12-3</id>
        <name>NS642</name>
        <sequence type="not described"/>
    </isoform>
</comment>
<comment type="miscellaneous">
    <molecule>Isoform NS0</molecule>
    <text evidence="2">Produced by alternative promoter usage.</text>
</comment>
<organismHost>
    <name type="scientific">Sus scrofa</name>
    <name type="common">Pig</name>
    <dbReference type="NCBI Taxonomy" id="9823"/>
</organismHost>
<protein>
    <recommendedName>
        <fullName>Protein NS0</fullName>
    </recommendedName>
</protein>
<dbReference type="EMBL" id="AY094619">
    <property type="protein sequence ID" value="AAM21848.1"/>
    <property type="molecule type" value="Genomic_DNA"/>
</dbReference>
<dbReference type="Proteomes" id="UP000000470">
    <property type="component" value="Genome"/>
</dbReference>
<dbReference type="InterPro" id="IPR009527">
    <property type="entry name" value="Circovirus2_Orf1"/>
</dbReference>
<dbReference type="Pfam" id="PF06615">
    <property type="entry name" value="Circovir2_Orf1"/>
    <property type="match status" value="1"/>
</dbReference>
<reference key="1">
    <citation type="journal article" date="2003" name="Virology">
        <title>Transcriptional analysis of porcine circovirus type 2.</title>
        <authorList>
            <person name="Cheung A.K."/>
        </authorList>
    </citation>
    <scope>NUCLEOTIDE SEQUENCE [GENOMIC DNA]</scope>
    <source>
        <strain>Isolate PCV/688</strain>
    </source>
</reference>
<reference key="2">
    <citation type="journal article" date="2003" name="Virology">
        <title>The essential and nonessential transcription units for viral protein synthesis and DNA replication of porcine circovirus type 2.</title>
        <authorList>
            <person name="Cheung A.K."/>
        </authorList>
    </citation>
    <scope>FUNCTION</scope>
    <scope>ALTERNATIVE SPLICING</scope>
</reference>
<reference key="3">
    <citation type="journal article" date="2014" name="Virus Genes">
        <title>Current understanding of genomic DNA of porcine circovirus type 2.</title>
        <authorList>
            <person name="Lv Q.Z."/>
            <person name="Guo K.K."/>
            <person name="Zhang Y.M."/>
        </authorList>
    </citation>
    <scope>REVIEW</scope>
</reference>